<organism>
    <name type="scientific">Homo sapiens</name>
    <name type="common">Human</name>
    <dbReference type="NCBI Taxonomy" id="9606"/>
    <lineage>
        <taxon>Eukaryota</taxon>
        <taxon>Metazoa</taxon>
        <taxon>Chordata</taxon>
        <taxon>Craniata</taxon>
        <taxon>Vertebrata</taxon>
        <taxon>Euteleostomi</taxon>
        <taxon>Mammalia</taxon>
        <taxon>Eutheria</taxon>
        <taxon>Euarchontoglires</taxon>
        <taxon>Primates</taxon>
        <taxon>Haplorrhini</taxon>
        <taxon>Catarrhini</taxon>
        <taxon>Hominidae</taxon>
        <taxon>Homo</taxon>
    </lineage>
</organism>
<gene>
    <name type="primary">TAF9B</name>
    <name type="synonym">TAF9L</name>
</gene>
<reference evidence="6" key="1">
    <citation type="submission" date="1998-07" db="EMBL/GenBank/DDBJ databases">
        <title>Human neuronal cell death related gene in neuron-7 (DN-7).</title>
        <authorList>
            <person name="Peng Y."/>
            <person name="Song H."/>
            <person name="Zhou J."/>
            <person name="Huang Q."/>
            <person name="Dai M."/>
            <person name="Mao Y."/>
            <person name="Yu Y."/>
            <person name="Xu X."/>
            <person name="Luo B."/>
            <person name="Chen J."/>
            <person name="Hu R."/>
        </authorList>
    </citation>
    <scope>NUCLEOTIDE SEQUENCE [MRNA]</scope>
    <source>
        <tissue evidence="6">Pituitary</tissue>
    </source>
</reference>
<reference evidence="6" key="2">
    <citation type="submission" date="2000-01" db="EMBL/GenBank/DDBJ databases">
        <title>Characterization of a new TAFII31 gene located in Xq13.3.</title>
        <authorList>
            <person name="Villard L."/>
        </authorList>
    </citation>
    <scope>NUCLEOTIDE SEQUENCE [MRNA]</scope>
</reference>
<reference evidence="5 9" key="3">
    <citation type="journal article" date="2005" name="Nature">
        <title>The DNA sequence of the human X chromosome.</title>
        <authorList>
            <person name="Ross M.T."/>
            <person name="Grafham D.V."/>
            <person name="Coffey A.J."/>
            <person name="Scherer S."/>
            <person name="McLay K."/>
            <person name="Muzny D."/>
            <person name="Platzer M."/>
            <person name="Howell G.R."/>
            <person name="Burrows C."/>
            <person name="Bird C.P."/>
            <person name="Frankish A."/>
            <person name="Lovell F.L."/>
            <person name="Howe K.L."/>
            <person name="Ashurst J.L."/>
            <person name="Fulton R.S."/>
            <person name="Sudbrak R."/>
            <person name="Wen G."/>
            <person name="Jones M.C."/>
            <person name="Hurles M.E."/>
            <person name="Andrews T.D."/>
            <person name="Scott C.E."/>
            <person name="Searle S."/>
            <person name="Ramser J."/>
            <person name="Whittaker A."/>
            <person name="Deadman R."/>
            <person name="Carter N.P."/>
            <person name="Hunt S.E."/>
            <person name="Chen R."/>
            <person name="Cree A."/>
            <person name="Gunaratne P."/>
            <person name="Havlak P."/>
            <person name="Hodgson A."/>
            <person name="Metzker M.L."/>
            <person name="Richards S."/>
            <person name="Scott G."/>
            <person name="Steffen D."/>
            <person name="Sodergren E."/>
            <person name="Wheeler D.A."/>
            <person name="Worley K.C."/>
            <person name="Ainscough R."/>
            <person name="Ambrose K.D."/>
            <person name="Ansari-Lari M.A."/>
            <person name="Aradhya S."/>
            <person name="Ashwell R.I."/>
            <person name="Babbage A.K."/>
            <person name="Bagguley C.L."/>
            <person name="Ballabio A."/>
            <person name="Banerjee R."/>
            <person name="Barker G.E."/>
            <person name="Barlow K.F."/>
            <person name="Barrett I.P."/>
            <person name="Bates K.N."/>
            <person name="Beare D.M."/>
            <person name="Beasley H."/>
            <person name="Beasley O."/>
            <person name="Beck A."/>
            <person name="Bethel G."/>
            <person name="Blechschmidt K."/>
            <person name="Brady N."/>
            <person name="Bray-Allen S."/>
            <person name="Bridgeman A.M."/>
            <person name="Brown A.J."/>
            <person name="Brown M.J."/>
            <person name="Bonnin D."/>
            <person name="Bruford E.A."/>
            <person name="Buhay C."/>
            <person name="Burch P."/>
            <person name="Burford D."/>
            <person name="Burgess J."/>
            <person name="Burrill W."/>
            <person name="Burton J."/>
            <person name="Bye J.M."/>
            <person name="Carder C."/>
            <person name="Carrel L."/>
            <person name="Chako J."/>
            <person name="Chapman J.C."/>
            <person name="Chavez D."/>
            <person name="Chen E."/>
            <person name="Chen G."/>
            <person name="Chen Y."/>
            <person name="Chen Z."/>
            <person name="Chinault C."/>
            <person name="Ciccodicola A."/>
            <person name="Clark S.Y."/>
            <person name="Clarke G."/>
            <person name="Clee C.M."/>
            <person name="Clegg S."/>
            <person name="Clerc-Blankenburg K."/>
            <person name="Clifford K."/>
            <person name="Cobley V."/>
            <person name="Cole C.G."/>
            <person name="Conquer J.S."/>
            <person name="Corby N."/>
            <person name="Connor R.E."/>
            <person name="David R."/>
            <person name="Davies J."/>
            <person name="Davis C."/>
            <person name="Davis J."/>
            <person name="Delgado O."/>
            <person name="Deshazo D."/>
            <person name="Dhami P."/>
            <person name="Ding Y."/>
            <person name="Dinh H."/>
            <person name="Dodsworth S."/>
            <person name="Draper H."/>
            <person name="Dugan-Rocha S."/>
            <person name="Dunham A."/>
            <person name="Dunn M."/>
            <person name="Durbin K.J."/>
            <person name="Dutta I."/>
            <person name="Eades T."/>
            <person name="Ellwood M."/>
            <person name="Emery-Cohen A."/>
            <person name="Errington H."/>
            <person name="Evans K.L."/>
            <person name="Faulkner L."/>
            <person name="Francis F."/>
            <person name="Frankland J."/>
            <person name="Fraser A.E."/>
            <person name="Galgoczy P."/>
            <person name="Gilbert J."/>
            <person name="Gill R."/>
            <person name="Gloeckner G."/>
            <person name="Gregory S.G."/>
            <person name="Gribble S."/>
            <person name="Griffiths C."/>
            <person name="Grocock R."/>
            <person name="Gu Y."/>
            <person name="Gwilliam R."/>
            <person name="Hamilton C."/>
            <person name="Hart E.A."/>
            <person name="Hawes A."/>
            <person name="Heath P.D."/>
            <person name="Heitmann K."/>
            <person name="Hennig S."/>
            <person name="Hernandez J."/>
            <person name="Hinzmann B."/>
            <person name="Ho S."/>
            <person name="Hoffs M."/>
            <person name="Howden P.J."/>
            <person name="Huckle E.J."/>
            <person name="Hume J."/>
            <person name="Hunt P.J."/>
            <person name="Hunt A.R."/>
            <person name="Isherwood J."/>
            <person name="Jacob L."/>
            <person name="Johnson D."/>
            <person name="Jones S."/>
            <person name="de Jong P.J."/>
            <person name="Joseph S.S."/>
            <person name="Keenan S."/>
            <person name="Kelly S."/>
            <person name="Kershaw J.K."/>
            <person name="Khan Z."/>
            <person name="Kioschis P."/>
            <person name="Klages S."/>
            <person name="Knights A.J."/>
            <person name="Kosiura A."/>
            <person name="Kovar-Smith C."/>
            <person name="Laird G.K."/>
            <person name="Langford C."/>
            <person name="Lawlor S."/>
            <person name="Leversha M."/>
            <person name="Lewis L."/>
            <person name="Liu W."/>
            <person name="Lloyd C."/>
            <person name="Lloyd D.M."/>
            <person name="Loulseged H."/>
            <person name="Loveland J.E."/>
            <person name="Lovell J.D."/>
            <person name="Lozado R."/>
            <person name="Lu J."/>
            <person name="Lyne R."/>
            <person name="Ma J."/>
            <person name="Maheshwari M."/>
            <person name="Matthews L.H."/>
            <person name="McDowall J."/>
            <person name="McLaren S."/>
            <person name="McMurray A."/>
            <person name="Meidl P."/>
            <person name="Meitinger T."/>
            <person name="Milne S."/>
            <person name="Miner G."/>
            <person name="Mistry S.L."/>
            <person name="Morgan M."/>
            <person name="Morris S."/>
            <person name="Mueller I."/>
            <person name="Mullikin J.C."/>
            <person name="Nguyen N."/>
            <person name="Nordsiek G."/>
            <person name="Nyakatura G."/>
            <person name="O'dell C.N."/>
            <person name="Okwuonu G."/>
            <person name="Palmer S."/>
            <person name="Pandian R."/>
            <person name="Parker D."/>
            <person name="Parrish J."/>
            <person name="Pasternak S."/>
            <person name="Patel D."/>
            <person name="Pearce A.V."/>
            <person name="Pearson D.M."/>
            <person name="Pelan S.E."/>
            <person name="Perez L."/>
            <person name="Porter K.M."/>
            <person name="Ramsey Y."/>
            <person name="Reichwald K."/>
            <person name="Rhodes S."/>
            <person name="Ridler K.A."/>
            <person name="Schlessinger D."/>
            <person name="Schueler M.G."/>
            <person name="Sehra H.K."/>
            <person name="Shaw-Smith C."/>
            <person name="Shen H."/>
            <person name="Sheridan E.M."/>
            <person name="Shownkeen R."/>
            <person name="Skuce C.D."/>
            <person name="Smith M.L."/>
            <person name="Sotheran E.C."/>
            <person name="Steingruber H.E."/>
            <person name="Steward C.A."/>
            <person name="Storey R."/>
            <person name="Swann R.M."/>
            <person name="Swarbreck D."/>
            <person name="Tabor P.E."/>
            <person name="Taudien S."/>
            <person name="Taylor T."/>
            <person name="Teague B."/>
            <person name="Thomas K."/>
            <person name="Thorpe A."/>
            <person name="Timms K."/>
            <person name="Tracey A."/>
            <person name="Trevanion S."/>
            <person name="Tromans A.C."/>
            <person name="d'Urso M."/>
            <person name="Verduzco D."/>
            <person name="Villasana D."/>
            <person name="Waldron L."/>
            <person name="Wall M."/>
            <person name="Wang Q."/>
            <person name="Warren J."/>
            <person name="Warry G.L."/>
            <person name="Wei X."/>
            <person name="West A."/>
            <person name="Whitehead S.L."/>
            <person name="Whiteley M.N."/>
            <person name="Wilkinson J.E."/>
            <person name="Willey D.L."/>
            <person name="Williams G."/>
            <person name="Williams L."/>
            <person name="Williamson A."/>
            <person name="Williamson H."/>
            <person name="Wilming L."/>
            <person name="Woodmansey R.L."/>
            <person name="Wray P.W."/>
            <person name="Yen J."/>
            <person name="Zhang J."/>
            <person name="Zhou J."/>
            <person name="Zoghbi H."/>
            <person name="Zorilla S."/>
            <person name="Buck D."/>
            <person name="Reinhardt R."/>
            <person name="Poustka A."/>
            <person name="Rosenthal A."/>
            <person name="Lehrach H."/>
            <person name="Meindl A."/>
            <person name="Minx P.J."/>
            <person name="Hillier L.W."/>
            <person name="Willard H.F."/>
            <person name="Wilson R.K."/>
            <person name="Waterston R.H."/>
            <person name="Rice C.M."/>
            <person name="Vaudin M."/>
            <person name="Coulson A."/>
            <person name="Nelson D.L."/>
            <person name="Weinstock G."/>
            <person name="Sulston J.E."/>
            <person name="Durbin R.M."/>
            <person name="Hubbard T."/>
            <person name="Gibbs R.A."/>
            <person name="Beck S."/>
            <person name="Rogers J."/>
            <person name="Bentley D.R."/>
        </authorList>
    </citation>
    <scope>NUCLEOTIDE SEQUENCE [LARGE SCALE GENOMIC DNA]</scope>
</reference>
<reference evidence="6" key="4">
    <citation type="submission" date="2005-09" db="EMBL/GenBank/DDBJ databases">
        <authorList>
            <person name="Mural R.J."/>
            <person name="Istrail S."/>
            <person name="Sutton G.G."/>
            <person name="Florea L."/>
            <person name="Halpern A.L."/>
            <person name="Mobarry C.M."/>
            <person name="Lippert R."/>
            <person name="Walenz B."/>
            <person name="Shatkay H."/>
            <person name="Dew I."/>
            <person name="Miller J.R."/>
            <person name="Flanigan M.J."/>
            <person name="Edwards N.J."/>
            <person name="Bolanos R."/>
            <person name="Fasulo D."/>
            <person name="Halldorsson B.V."/>
            <person name="Hannenhalli S."/>
            <person name="Turner R."/>
            <person name="Yooseph S."/>
            <person name="Lu F."/>
            <person name="Nusskern D.R."/>
            <person name="Shue B.C."/>
            <person name="Zheng X.H."/>
            <person name="Zhong F."/>
            <person name="Delcher A.L."/>
            <person name="Huson D.H."/>
            <person name="Kravitz S.A."/>
            <person name="Mouchard L."/>
            <person name="Reinert K."/>
            <person name="Remington K.A."/>
            <person name="Clark A.G."/>
            <person name="Waterman M.S."/>
            <person name="Eichler E.E."/>
            <person name="Adams M.D."/>
            <person name="Hunkapiller M.W."/>
            <person name="Myers E.W."/>
            <person name="Venter J.C."/>
        </authorList>
    </citation>
    <scope>NUCLEOTIDE SEQUENCE [LARGE SCALE GENOMIC DNA]</scope>
</reference>
<reference evidence="7" key="5">
    <citation type="journal article" date="2004" name="Genome Res.">
        <title>The status, quality, and expansion of the NIH full-length cDNA project: the Mammalian Gene Collection (MGC).</title>
        <authorList>
            <consortium name="The MGC Project Team"/>
        </authorList>
    </citation>
    <scope>NUCLEOTIDE SEQUENCE [LARGE SCALE MRNA]</scope>
    <source>
        <tissue evidence="8">Brain</tissue>
        <tissue evidence="7">Urinary bladder</tissue>
    </source>
</reference>
<reference evidence="5" key="6">
    <citation type="journal article" date="2005" name="Mol. Cell. Biol.">
        <title>TAF9b (formerly TAF9L) is a bona fide TAF that has unique and overlapping roles with TAF9.</title>
        <authorList>
            <person name="Frontini M."/>
            <person name="Soutoglou E."/>
            <person name="Argentini M."/>
            <person name="Bole-Feysot C."/>
            <person name="Jost B."/>
            <person name="Scheer E."/>
            <person name="Tora L."/>
        </authorList>
    </citation>
    <scope>FUNCTION</scope>
    <scope>IDENTIFICATION IN THE TFTC-HAT COMPLEX</scope>
    <scope>INTERACTION WITH TAF5 AND TAF6</scope>
</reference>
<reference key="7">
    <citation type="journal article" date="2009" name="Sci. Signal.">
        <title>Quantitative phosphoproteomic analysis of T cell receptor signaling reveals system-wide modulation of protein-protein interactions.</title>
        <authorList>
            <person name="Mayya V."/>
            <person name="Lundgren D.H."/>
            <person name="Hwang S.-I."/>
            <person name="Rezaul K."/>
            <person name="Wu L."/>
            <person name="Eng J.K."/>
            <person name="Rodionov V."/>
            <person name="Han D.K."/>
        </authorList>
    </citation>
    <scope>PHOSPHORYLATION [LARGE SCALE ANALYSIS] AT THR-159</scope>
    <scope>IDENTIFICATION BY MASS SPECTROMETRY [LARGE SCALE ANALYSIS]</scope>
    <source>
        <tissue>Leukemic T-cell</tissue>
    </source>
</reference>
<reference key="8">
    <citation type="journal article" date="2010" name="Sci. Signal.">
        <title>Quantitative phosphoproteomics reveals widespread full phosphorylation site occupancy during mitosis.</title>
        <authorList>
            <person name="Olsen J.V."/>
            <person name="Vermeulen M."/>
            <person name="Santamaria A."/>
            <person name="Kumar C."/>
            <person name="Miller M.L."/>
            <person name="Jensen L.J."/>
            <person name="Gnad F."/>
            <person name="Cox J."/>
            <person name="Jensen T.S."/>
            <person name="Nigg E.A."/>
            <person name="Brunak S."/>
            <person name="Mann M."/>
        </authorList>
    </citation>
    <scope>PHOSPHORYLATION [LARGE SCALE ANALYSIS] AT THR-174 AND SER-177</scope>
    <scope>IDENTIFICATION BY MASS SPECTROMETRY [LARGE SCALE ANALYSIS]</scope>
    <source>
        <tissue>Cervix carcinoma</tissue>
    </source>
</reference>
<reference key="9">
    <citation type="journal article" date="2011" name="BMC Syst. Biol.">
        <title>Initial characterization of the human central proteome.</title>
        <authorList>
            <person name="Burkard T.R."/>
            <person name="Planyavsky M."/>
            <person name="Kaupe I."/>
            <person name="Breitwieser F.P."/>
            <person name="Buerckstuemmer T."/>
            <person name="Bennett K.L."/>
            <person name="Superti-Furga G."/>
            <person name="Colinge J."/>
        </authorList>
    </citation>
    <scope>IDENTIFICATION BY MASS SPECTROMETRY [LARGE SCALE ANALYSIS]</scope>
</reference>
<reference key="10">
    <citation type="journal article" date="2012" name="Proc. Natl. Acad. Sci. U.S.A.">
        <title>N-terminal acetylome analyses and functional insights of the N-terminal acetyltransferase NatB.</title>
        <authorList>
            <person name="Van Damme P."/>
            <person name="Lasa M."/>
            <person name="Polevoda B."/>
            <person name="Gazquez C."/>
            <person name="Elosegui-Artola A."/>
            <person name="Kim D.S."/>
            <person name="De Juan-Pardo E."/>
            <person name="Demeyer K."/>
            <person name="Hole K."/>
            <person name="Larrea E."/>
            <person name="Timmerman E."/>
            <person name="Prieto J."/>
            <person name="Arnesen T."/>
            <person name="Sherman F."/>
            <person name="Gevaert K."/>
            <person name="Aldabe R."/>
        </authorList>
    </citation>
    <scope>ACETYLATION [LARGE SCALE ANALYSIS] AT MET-1</scope>
    <scope>IDENTIFICATION BY MASS SPECTROMETRY [LARGE SCALE ANALYSIS]</scope>
</reference>
<reference key="11">
    <citation type="journal article" date="2013" name="J. Proteome Res.">
        <title>Toward a comprehensive characterization of a human cancer cell phosphoproteome.</title>
        <authorList>
            <person name="Zhou H."/>
            <person name="Di Palma S."/>
            <person name="Preisinger C."/>
            <person name="Peng M."/>
            <person name="Polat A.N."/>
            <person name="Heck A.J."/>
            <person name="Mohammed S."/>
        </authorList>
    </citation>
    <scope>PHOSPHORYLATION [LARGE SCALE ANALYSIS] AT SER-147 AND THR-174</scope>
    <scope>IDENTIFICATION BY MASS SPECTROMETRY [LARGE SCALE ANALYSIS]</scope>
    <source>
        <tissue>Cervix carcinoma</tissue>
        <tissue>Erythroleukemia</tissue>
    </source>
</reference>
<name>TAF9B_HUMAN</name>
<accession>Q9HBM6</accession>
<accession>B2RUZ9</accession>
<accession>Q9Y2S3</accession>
<evidence type="ECO:0000250" key="1"/>
<evidence type="ECO:0000255" key="2"/>
<evidence type="ECO:0000256" key="3">
    <source>
        <dbReference type="SAM" id="MobiDB-lite"/>
    </source>
</evidence>
<evidence type="ECO:0000269" key="4">
    <source>
    </source>
</evidence>
<evidence type="ECO:0000305" key="5"/>
<evidence type="ECO:0000312" key="6">
    <source>
        <dbReference type="EMBL" id="AAD27786.1"/>
    </source>
</evidence>
<evidence type="ECO:0000312" key="7">
    <source>
        <dbReference type="EMBL" id="AAH09566.1"/>
    </source>
</evidence>
<evidence type="ECO:0000312" key="8">
    <source>
        <dbReference type="EMBL" id="AAH10350.1"/>
    </source>
</evidence>
<evidence type="ECO:0000312" key="9">
    <source>
        <dbReference type="EMBL" id="AL049589"/>
    </source>
</evidence>
<evidence type="ECO:0007744" key="10">
    <source>
    </source>
</evidence>
<evidence type="ECO:0007744" key="11">
    <source>
    </source>
</evidence>
<evidence type="ECO:0007744" key="12">
    <source>
    </source>
</evidence>
<evidence type="ECO:0007744" key="13">
    <source>
    </source>
</evidence>
<evidence type="ECO:0007829" key="14">
    <source>
        <dbReference type="PDB" id="7KTR"/>
    </source>
</evidence>
<protein>
    <recommendedName>
        <fullName>Transcription initiation factor TFIID subunit 9B</fullName>
    </recommendedName>
    <alternativeName>
        <fullName>Neuronal cell death-related protein 7</fullName>
        <shortName>DN-7</shortName>
    </alternativeName>
    <alternativeName>
        <fullName>Transcription initiation factor TFIID subunit 9-like</fullName>
    </alternativeName>
    <alternativeName>
        <fullName>Transcription-associated factor TAFII31L</fullName>
    </alternativeName>
</protein>
<dbReference type="EMBL" id="AF077053">
    <property type="protein sequence ID" value="AAD27786.1"/>
    <property type="molecule type" value="mRNA"/>
</dbReference>
<dbReference type="EMBL" id="AF220509">
    <property type="protein sequence ID" value="AAG09711.1"/>
    <property type="molecule type" value="mRNA"/>
</dbReference>
<dbReference type="EMBL" id="AL049589">
    <property type="status" value="NOT_ANNOTATED_CDS"/>
    <property type="molecule type" value="Genomic_DNA"/>
</dbReference>
<dbReference type="EMBL" id="CH471104">
    <property type="protein sequence ID" value="EAW98601.1"/>
    <property type="molecule type" value="Genomic_DNA"/>
</dbReference>
<dbReference type="EMBL" id="BC009566">
    <property type="protein sequence ID" value="AAH09566.1"/>
    <property type="molecule type" value="mRNA"/>
</dbReference>
<dbReference type="EMBL" id="BC010350">
    <property type="protein sequence ID" value="AAH10350.1"/>
    <property type="molecule type" value="mRNA"/>
</dbReference>
<dbReference type="EMBL" id="BC071649">
    <property type="protein sequence ID" value="AAH71649.1"/>
    <property type="molecule type" value="mRNA"/>
</dbReference>
<dbReference type="EMBL" id="BC146952">
    <property type="protein sequence ID" value="AAI46953.1"/>
    <property type="molecule type" value="mRNA"/>
</dbReference>
<dbReference type="EMBL" id="BC146960">
    <property type="protein sequence ID" value="AAI46961.1"/>
    <property type="molecule type" value="mRNA"/>
</dbReference>
<dbReference type="CCDS" id="CCDS35340.1"/>
<dbReference type="RefSeq" id="NP_057059.2">
    <property type="nucleotide sequence ID" value="NM_015975.4"/>
</dbReference>
<dbReference type="PDB" id="7KTR">
    <property type="method" value="EM"/>
    <property type="resolution" value="2.93 A"/>
    <property type="chains" value="E=1-251"/>
</dbReference>
<dbReference type="PDB" id="7KTS">
    <property type="method" value="EM"/>
    <property type="resolution" value="19.09 A"/>
    <property type="chains" value="E=1-251"/>
</dbReference>
<dbReference type="PDBsum" id="7KTR"/>
<dbReference type="PDBsum" id="7KTS"/>
<dbReference type="EMDB" id="EMD-23027"/>
<dbReference type="EMDB" id="EMD-23028"/>
<dbReference type="SMR" id="Q9HBM6"/>
<dbReference type="BioGRID" id="119639">
    <property type="interactions" value="121"/>
</dbReference>
<dbReference type="CORUM" id="Q9HBM6"/>
<dbReference type="FunCoup" id="Q9HBM6">
    <property type="interactions" value="1131"/>
</dbReference>
<dbReference type="IntAct" id="Q9HBM6">
    <property type="interactions" value="64"/>
</dbReference>
<dbReference type="MINT" id="Q9HBM6"/>
<dbReference type="STRING" id="9606.ENSP00000339917"/>
<dbReference type="GlyCosmos" id="Q9HBM6">
    <property type="glycosylation" value="7 sites, 2 glycans"/>
</dbReference>
<dbReference type="GlyGen" id="Q9HBM6">
    <property type="glycosylation" value="10 sites, 2 O-linked glycans (10 sites)"/>
</dbReference>
<dbReference type="iPTMnet" id="Q9HBM6"/>
<dbReference type="PhosphoSitePlus" id="Q9HBM6"/>
<dbReference type="BioMuta" id="TAF9B"/>
<dbReference type="DMDM" id="74752778"/>
<dbReference type="jPOST" id="Q9HBM6"/>
<dbReference type="MassIVE" id="Q9HBM6"/>
<dbReference type="PaxDb" id="9606-ENSP00000339917"/>
<dbReference type="PeptideAtlas" id="Q9HBM6"/>
<dbReference type="ProteomicsDB" id="81578"/>
<dbReference type="Pumba" id="Q9HBM6"/>
<dbReference type="Antibodypedia" id="28250">
    <property type="antibodies" value="135 antibodies from 24 providers"/>
</dbReference>
<dbReference type="DNASU" id="51616"/>
<dbReference type="Ensembl" id="ENST00000341864.6">
    <property type="protein sequence ID" value="ENSP00000339917.5"/>
    <property type="gene ID" value="ENSG00000187325.5"/>
</dbReference>
<dbReference type="GeneID" id="51616"/>
<dbReference type="KEGG" id="hsa:51616"/>
<dbReference type="MANE-Select" id="ENST00000341864.6">
    <property type="protein sequence ID" value="ENSP00000339917.5"/>
    <property type="RefSeq nucleotide sequence ID" value="NM_015975.5"/>
    <property type="RefSeq protein sequence ID" value="NP_057059.2"/>
</dbReference>
<dbReference type="UCSC" id="uc004eda.4">
    <property type="organism name" value="human"/>
</dbReference>
<dbReference type="AGR" id="HGNC:17306"/>
<dbReference type="CTD" id="51616"/>
<dbReference type="DisGeNET" id="51616"/>
<dbReference type="GeneCards" id="TAF9B"/>
<dbReference type="HGNC" id="HGNC:17306">
    <property type="gene designation" value="TAF9B"/>
</dbReference>
<dbReference type="HPA" id="ENSG00000187325">
    <property type="expression patterns" value="Low tissue specificity"/>
</dbReference>
<dbReference type="MIM" id="300754">
    <property type="type" value="gene"/>
</dbReference>
<dbReference type="neXtProt" id="NX_Q9HBM6"/>
<dbReference type="OpenTargets" id="ENSG00000187325"/>
<dbReference type="PharmGKB" id="PA38225"/>
<dbReference type="VEuPathDB" id="HostDB:ENSG00000187325"/>
<dbReference type="eggNOG" id="KOG3334">
    <property type="taxonomic scope" value="Eukaryota"/>
</dbReference>
<dbReference type="GeneTree" id="ENSGT00940000161697"/>
<dbReference type="HOGENOM" id="CLU_068315_2_0_1"/>
<dbReference type="InParanoid" id="Q9HBM6"/>
<dbReference type="OMA" id="DDNDTMI"/>
<dbReference type="OrthoDB" id="341924at2759"/>
<dbReference type="PAN-GO" id="Q9HBM6">
    <property type="GO annotations" value="2 GO annotations based on evolutionary models"/>
</dbReference>
<dbReference type="PhylomeDB" id="Q9HBM6"/>
<dbReference type="TreeFam" id="TF351417"/>
<dbReference type="PathwayCommons" id="Q9HBM6"/>
<dbReference type="Reactome" id="R-HSA-167161">
    <property type="pathway name" value="HIV Transcription Initiation"/>
</dbReference>
<dbReference type="Reactome" id="R-HSA-167162">
    <property type="pathway name" value="RNA Polymerase II HIV Promoter Escape"/>
</dbReference>
<dbReference type="Reactome" id="R-HSA-167172">
    <property type="pathway name" value="Transcription of the HIV genome"/>
</dbReference>
<dbReference type="Reactome" id="R-HSA-5689880">
    <property type="pathway name" value="Ub-specific processing proteases"/>
</dbReference>
<dbReference type="Reactome" id="R-HSA-674695">
    <property type="pathway name" value="RNA Polymerase II Pre-transcription Events"/>
</dbReference>
<dbReference type="Reactome" id="R-HSA-6804756">
    <property type="pathway name" value="Regulation of TP53 Activity through Phosphorylation"/>
</dbReference>
<dbReference type="Reactome" id="R-HSA-73776">
    <property type="pathway name" value="RNA Polymerase II Promoter Escape"/>
</dbReference>
<dbReference type="Reactome" id="R-HSA-73779">
    <property type="pathway name" value="RNA Polymerase II Transcription Pre-Initiation And Promoter Opening"/>
</dbReference>
<dbReference type="Reactome" id="R-HSA-75953">
    <property type="pathway name" value="RNA Polymerase II Transcription Initiation"/>
</dbReference>
<dbReference type="Reactome" id="R-HSA-76042">
    <property type="pathway name" value="RNA Polymerase II Transcription Initiation And Promoter Clearance"/>
</dbReference>
<dbReference type="SignaLink" id="Q9HBM6"/>
<dbReference type="BioGRID-ORCS" id="51616">
    <property type="hits" value="29 hits in 780 CRISPR screens"/>
</dbReference>
<dbReference type="ChiTaRS" id="TAF9B">
    <property type="organism name" value="human"/>
</dbReference>
<dbReference type="GeneWiki" id="TAF9B"/>
<dbReference type="GenomeRNAi" id="51616"/>
<dbReference type="Pharos" id="Q9HBM6">
    <property type="development level" value="Tbio"/>
</dbReference>
<dbReference type="PRO" id="PR:Q9HBM6"/>
<dbReference type="Proteomes" id="UP000005640">
    <property type="component" value="Chromosome X"/>
</dbReference>
<dbReference type="RNAct" id="Q9HBM6">
    <property type="molecule type" value="protein"/>
</dbReference>
<dbReference type="Bgee" id="ENSG00000187325">
    <property type="expression patterns" value="Expressed in primordial germ cell in gonad and 191 other cell types or tissues"/>
</dbReference>
<dbReference type="GO" id="GO:0005654">
    <property type="term" value="C:nucleoplasm"/>
    <property type="evidence" value="ECO:0000304"/>
    <property type="project" value="Reactome"/>
</dbReference>
<dbReference type="GO" id="GO:0005669">
    <property type="term" value="C:transcription factor TFIID complex"/>
    <property type="evidence" value="ECO:0000314"/>
    <property type="project" value="UniProtKB"/>
</dbReference>
<dbReference type="GO" id="GO:0033276">
    <property type="term" value="C:transcription factor TFTC complex"/>
    <property type="evidence" value="ECO:0000314"/>
    <property type="project" value="UniProtKB"/>
</dbReference>
<dbReference type="GO" id="GO:0046982">
    <property type="term" value="F:protein heterodimerization activity"/>
    <property type="evidence" value="ECO:0007669"/>
    <property type="project" value="InterPro"/>
</dbReference>
<dbReference type="GO" id="GO:0016251">
    <property type="term" value="F:RNA polymerase II general transcription initiation factor activity"/>
    <property type="evidence" value="ECO:0000305"/>
    <property type="project" value="ARUK-UCL"/>
</dbReference>
<dbReference type="GO" id="GO:0003714">
    <property type="term" value="F:transcription corepressor activity"/>
    <property type="evidence" value="ECO:0000305"/>
    <property type="project" value="BHF-UCL"/>
</dbReference>
<dbReference type="GO" id="GO:0006352">
    <property type="term" value="P:DNA-templated transcription initiation"/>
    <property type="evidence" value="ECO:0007669"/>
    <property type="project" value="InterPro"/>
</dbReference>
<dbReference type="GO" id="GO:0043066">
    <property type="term" value="P:negative regulation of apoptotic process"/>
    <property type="evidence" value="ECO:0000315"/>
    <property type="project" value="BHF-UCL"/>
</dbReference>
<dbReference type="GO" id="GO:1902166">
    <property type="term" value="P:negative regulation of intrinsic apoptotic signaling pathway in response to DNA damage by p53 class mediator"/>
    <property type="evidence" value="ECO:0000305"/>
    <property type="project" value="BHF-UCL"/>
</dbReference>
<dbReference type="GO" id="GO:0000122">
    <property type="term" value="P:negative regulation of transcription by RNA polymerase II"/>
    <property type="evidence" value="ECO:0000315"/>
    <property type="project" value="BHF-UCL"/>
</dbReference>
<dbReference type="GO" id="GO:0030307">
    <property type="term" value="P:positive regulation of cell growth"/>
    <property type="evidence" value="ECO:0000315"/>
    <property type="project" value="UniProtKB"/>
</dbReference>
<dbReference type="GO" id="GO:0050821">
    <property type="term" value="P:protein stabilization"/>
    <property type="evidence" value="ECO:0000314"/>
    <property type="project" value="BHF-UCL"/>
</dbReference>
<dbReference type="CDD" id="cd07979">
    <property type="entry name" value="HFD_TAF9"/>
    <property type="match status" value="1"/>
</dbReference>
<dbReference type="FunFam" id="1.10.20.10:FF:000018">
    <property type="entry name" value="Transcription initiation factor TFIID subunit 9"/>
    <property type="match status" value="1"/>
</dbReference>
<dbReference type="Gene3D" id="1.10.20.10">
    <property type="entry name" value="Histone, subunit A"/>
    <property type="match status" value="1"/>
</dbReference>
<dbReference type="InterPro" id="IPR009072">
    <property type="entry name" value="Histone-fold"/>
</dbReference>
<dbReference type="InterPro" id="IPR003162">
    <property type="entry name" value="TFIID-31"/>
</dbReference>
<dbReference type="InterPro" id="IPR051431">
    <property type="entry name" value="TFIID_subunit_9"/>
</dbReference>
<dbReference type="PANTHER" id="PTHR48068">
    <property type="entry name" value="TAF9 RNA POLYMERASE II, TATA BOX-BINDING PROTEIN (TBP)-ASSOCIATED FACTOR"/>
    <property type="match status" value="1"/>
</dbReference>
<dbReference type="PANTHER" id="PTHR48068:SF5">
    <property type="entry name" value="TRANSCRIPTION INITIATION FACTOR TFIID SUBUNIT 9B"/>
    <property type="match status" value="1"/>
</dbReference>
<dbReference type="Pfam" id="PF02291">
    <property type="entry name" value="TFIID-31kDa"/>
    <property type="match status" value="1"/>
</dbReference>
<dbReference type="SUPFAM" id="SSF47113">
    <property type="entry name" value="Histone-fold"/>
    <property type="match status" value="1"/>
</dbReference>
<keyword id="KW-0002">3D-structure</keyword>
<keyword id="KW-0007">Acetylation</keyword>
<keyword id="KW-0539">Nucleus</keyword>
<keyword id="KW-0597">Phosphoprotein</keyword>
<keyword id="KW-1267">Proteomics identification</keyword>
<keyword id="KW-1185">Reference proteome</keyword>
<keyword id="KW-0804">Transcription</keyword>
<keyword id="KW-0805">Transcription regulation</keyword>
<comment type="function">
    <text evidence="4">Essential for cell viability. TAF9 and TAF9B are involved in transcriptional activation as well as repression of distinct but overlapping sets of genes. May have a role in gene regulation associated with apoptosis. TAFs are components of the transcription factor IID (TFIID) complex, the TBP-free TAFII complex (TFTC), the PCAF histone acetylase complex and the STAGA transcription coactivator-HAT complex. TFIID or TFTC are essential for the regulation of RNA polymerase II-mediated transcription.</text>
</comment>
<comment type="subunit">
    <text evidence="4">Binds TAF5 and TAF6. Component of TFIID and the TATA-binding protein-free TAF complex (TFTC). TFIID is composed of TATA binding protein (TBP) and a number of TBP-associated factors (TAFs). Binds N-terminal domain of p53/TP53 which is essential for transcription.</text>
</comment>
<comment type="interaction">
    <interactant intactId="EBI-751601">
        <id>Q9HBM6</id>
    </interactant>
    <interactant intactId="EBI-712941">
        <id>Q14919</id>
        <label>DRAP1</label>
    </interactant>
    <organismsDiffer>false</organismsDiffer>
    <experiments>7</experiments>
</comment>
<comment type="interaction">
    <interactant intactId="EBI-751601">
        <id>Q9HBM6</id>
    </interactant>
    <interactant intactId="EBI-743984">
        <id>Q9Y6J9</id>
        <label>TAF6L</label>
    </interactant>
    <organismsDiffer>false</organismsDiffer>
    <experiments>12</experiments>
</comment>
<comment type="interaction">
    <interactant intactId="EBI-751601">
        <id>Q9HBM6</id>
    </interactant>
    <interactant intactId="EBI-366083">
        <id>P04637</id>
        <label>TP53</label>
    </interactant>
    <organismsDiffer>false</organismsDiffer>
    <experiments>2</experiments>
</comment>
<comment type="subcellular location">
    <subcellularLocation>
        <location evidence="1">Nucleus</location>
    </subcellularLocation>
</comment>
<comment type="similarity">
    <text evidence="2">Belongs to the TAF9 family.</text>
</comment>
<feature type="chain" id="PRO_0000118891" description="Transcription initiation factor TFIID subunit 9B">
    <location>
        <begin position="1"/>
        <end position="251"/>
    </location>
</feature>
<feature type="region of interest" description="Disordered" evidence="3">
    <location>
        <begin position="229"/>
        <end position="251"/>
    </location>
</feature>
<feature type="modified residue" description="N-acetylmethionine" evidence="12">
    <location>
        <position position="1"/>
    </location>
</feature>
<feature type="modified residue" description="Phosphoserine" evidence="13">
    <location>
        <position position="147"/>
    </location>
</feature>
<feature type="modified residue" description="Phosphothreonine" evidence="10">
    <location>
        <position position="159"/>
    </location>
</feature>
<feature type="modified residue" description="Phosphothreonine" evidence="11 13">
    <location>
        <position position="174"/>
    </location>
</feature>
<feature type="modified residue" description="Phosphoserine" evidence="11">
    <location>
        <position position="177"/>
    </location>
</feature>
<feature type="sequence conflict" description="In Ref. 1; AAD27786." evidence="5" ref="1">
    <original>S</original>
    <variation>L</variation>
    <location>
        <position position="3"/>
    </location>
</feature>
<feature type="sequence conflict" description="In Ref. 1; AAD27786." evidence="5" ref="1">
    <original>I</original>
    <variation>D</variation>
    <location>
        <position position="209"/>
    </location>
</feature>
<feature type="helix" evidence="14">
    <location>
        <begin position="14"/>
        <end position="26"/>
    </location>
</feature>
<feature type="helix" evidence="14">
    <location>
        <begin position="35"/>
        <end position="60"/>
    </location>
</feature>
<feature type="helix" evidence="14">
    <location>
        <begin position="68"/>
        <end position="79"/>
    </location>
</feature>
<feature type="helix" evidence="14">
    <location>
        <begin position="89"/>
        <end position="100"/>
    </location>
</feature>
<feature type="helix" evidence="14">
    <location>
        <begin position="118"/>
        <end position="120"/>
    </location>
</feature>
<feature type="strand" evidence="14">
    <location>
        <begin position="127"/>
        <end position="131"/>
    </location>
</feature>
<sequence>MESGKMAPPKNAPRDALVMAQILKDMGITEYEPRVINQMLEFAFRYVTTILDDAKIYSSHAKKPNVDADDVRLAIQCRADQSFTSPPPRDFLLDIARQKNQTPLPLIKPYAGPRLPPDRYCLTAPNYRLKSLIKKGPNQGRLVPRLSVGAVSSKPTTPTIATPQTVSVPNKVATPMSVTSQRFTVQIPPSQSTPVKPVPATTAVQNVLINPSMIGPKNILITTNMVSSQNTANEANPLKRKHEDDDDNDIM</sequence>
<proteinExistence type="evidence at protein level"/>